<evidence type="ECO:0000255" key="1">
    <source>
        <dbReference type="HAMAP-Rule" id="MF_00150"/>
    </source>
</evidence>
<sequence>MKVAIIGATGYGGIELIRLLEQHPYFSIASLHSFSQVGECITNVYPHFQNVLVHTLQEIDVEEIEKEAEIVFLATPAGVSAELTPKLLAVGLKVIDLSGDFRMKDPFIYEQWYKRAAAKEGVLREAVYGLSEWKRSEIQKANLIANPGCFATAALLAILPLVRSGIIEEDSIIIDAKSGVSGAGKTPTTMTHFPELYDNLRIYKVNEHQHIPEIEQMLAEWNRETKPITFSTHLIPISRGIMVTLYAKVKREMEIEQLQQLYEEAYEQSAFIRIRMQGEFPSPKEVRGSNYCDMGIAYDERTGRVTIVSVIDNMMKGAAGQAIQNANIVAGLEETTGLQHMPLYL</sequence>
<organism>
    <name type="scientific">Bacillus anthracis (strain A0248)</name>
    <dbReference type="NCBI Taxonomy" id="592021"/>
    <lineage>
        <taxon>Bacteria</taxon>
        <taxon>Bacillati</taxon>
        <taxon>Bacillota</taxon>
        <taxon>Bacilli</taxon>
        <taxon>Bacillales</taxon>
        <taxon>Bacillaceae</taxon>
        <taxon>Bacillus</taxon>
        <taxon>Bacillus cereus group</taxon>
    </lineage>
</organism>
<reference key="1">
    <citation type="submission" date="2009-04" db="EMBL/GenBank/DDBJ databases">
        <title>Genome sequence of Bacillus anthracis A0248.</title>
        <authorList>
            <person name="Dodson R.J."/>
            <person name="Munk A.C."/>
            <person name="Bruce D."/>
            <person name="Detter C."/>
            <person name="Tapia R."/>
            <person name="Sutton G."/>
            <person name="Sims D."/>
            <person name="Brettin T."/>
        </authorList>
    </citation>
    <scope>NUCLEOTIDE SEQUENCE [LARGE SCALE GENOMIC DNA]</scope>
    <source>
        <strain>A0248</strain>
    </source>
</reference>
<name>ARGC_BACAA</name>
<accession>C3P7R8</accession>
<feature type="chain" id="PRO_1000123229" description="N-acetyl-gamma-glutamyl-phosphate reductase">
    <location>
        <begin position="1"/>
        <end position="345"/>
    </location>
</feature>
<feature type="active site" evidence="1">
    <location>
        <position position="149"/>
    </location>
</feature>
<proteinExistence type="inferred from homology"/>
<gene>
    <name evidence="1" type="primary">argC</name>
    <name type="ordered locus">BAA_4376</name>
</gene>
<protein>
    <recommendedName>
        <fullName evidence="1">N-acetyl-gamma-glutamyl-phosphate reductase</fullName>
        <shortName evidence="1">AGPR</shortName>
        <ecNumber evidence="1">1.2.1.38</ecNumber>
    </recommendedName>
    <alternativeName>
        <fullName evidence="1">N-acetyl-glutamate semialdehyde dehydrogenase</fullName>
        <shortName evidence="1">NAGSA dehydrogenase</shortName>
    </alternativeName>
</protein>
<dbReference type="EC" id="1.2.1.38" evidence="1"/>
<dbReference type="EMBL" id="CP001598">
    <property type="protein sequence ID" value="ACQ50120.1"/>
    <property type="molecule type" value="Genomic_DNA"/>
</dbReference>
<dbReference type="RefSeq" id="WP_000861221.1">
    <property type="nucleotide sequence ID" value="NC_012659.1"/>
</dbReference>
<dbReference type="SMR" id="C3P7R8"/>
<dbReference type="GeneID" id="45024020"/>
<dbReference type="KEGG" id="bai:BAA_4376"/>
<dbReference type="HOGENOM" id="CLU_006384_0_1_9"/>
<dbReference type="UniPathway" id="UPA00068">
    <property type="reaction ID" value="UER00108"/>
</dbReference>
<dbReference type="GO" id="GO:0005737">
    <property type="term" value="C:cytoplasm"/>
    <property type="evidence" value="ECO:0007669"/>
    <property type="project" value="UniProtKB-SubCell"/>
</dbReference>
<dbReference type="GO" id="GO:0003942">
    <property type="term" value="F:N-acetyl-gamma-glutamyl-phosphate reductase activity"/>
    <property type="evidence" value="ECO:0007669"/>
    <property type="project" value="UniProtKB-UniRule"/>
</dbReference>
<dbReference type="GO" id="GO:0051287">
    <property type="term" value="F:NAD binding"/>
    <property type="evidence" value="ECO:0007669"/>
    <property type="project" value="InterPro"/>
</dbReference>
<dbReference type="GO" id="GO:0070401">
    <property type="term" value="F:NADP+ binding"/>
    <property type="evidence" value="ECO:0007669"/>
    <property type="project" value="InterPro"/>
</dbReference>
<dbReference type="GO" id="GO:0006526">
    <property type="term" value="P:L-arginine biosynthetic process"/>
    <property type="evidence" value="ECO:0007669"/>
    <property type="project" value="UniProtKB-UniRule"/>
</dbReference>
<dbReference type="CDD" id="cd23934">
    <property type="entry name" value="AGPR_1_C"/>
    <property type="match status" value="1"/>
</dbReference>
<dbReference type="CDD" id="cd17895">
    <property type="entry name" value="AGPR_1_N"/>
    <property type="match status" value="1"/>
</dbReference>
<dbReference type="FunFam" id="3.30.360.10:FF:000014">
    <property type="entry name" value="N-acetyl-gamma-glutamyl-phosphate reductase"/>
    <property type="match status" value="1"/>
</dbReference>
<dbReference type="FunFam" id="3.40.50.720:FF:000117">
    <property type="entry name" value="N-acetyl-gamma-glutamyl-phosphate reductase"/>
    <property type="match status" value="1"/>
</dbReference>
<dbReference type="Gene3D" id="3.30.360.10">
    <property type="entry name" value="Dihydrodipicolinate Reductase, domain 2"/>
    <property type="match status" value="1"/>
</dbReference>
<dbReference type="Gene3D" id="3.40.50.720">
    <property type="entry name" value="NAD(P)-binding Rossmann-like Domain"/>
    <property type="match status" value="1"/>
</dbReference>
<dbReference type="HAMAP" id="MF_00150">
    <property type="entry name" value="ArgC_type1"/>
    <property type="match status" value="1"/>
</dbReference>
<dbReference type="InterPro" id="IPR023013">
    <property type="entry name" value="AGPR_AS"/>
</dbReference>
<dbReference type="InterPro" id="IPR000706">
    <property type="entry name" value="AGPR_type-1"/>
</dbReference>
<dbReference type="InterPro" id="IPR036291">
    <property type="entry name" value="NAD(P)-bd_dom_sf"/>
</dbReference>
<dbReference type="InterPro" id="IPR050085">
    <property type="entry name" value="NAGSA_dehydrogenase"/>
</dbReference>
<dbReference type="InterPro" id="IPR000534">
    <property type="entry name" value="Semialdehyde_DH_NAD-bd"/>
</dbReference>
<dbReference type="NCBIfam" id="TIGR01850">
    <property type="entry name" value="argC"/>
    <property type="match status" value="1"/>
</dbReference>
<dbReference type="PANTHER" id="PTHR32338:SF10">
    <property type="entry name" value="N-ACETYL-GAMMA-GLUTAMYL-PHOSPHATE REDUCTASE, CHLOROPLASTIC-RELATED"/>
    <property type="match status" value="1"/>
</dbReference>
<dbReference type="PANTHER" id="PTHR32338">
    <property type="entry name" value="N-ACETYL-GAMMA-GLUTAMYL-PHOSPHATE REDUCTASE, CHLOROPLASTIC-RELATED-RELATED"/>
    <property type="match status" value="1"/>
</dbReference>
<dbReference type="Pfam" id="PF01118">
    <property type="entry name" value="Semialdhyde_dh"/>
    <property type="match status" value="1"/>
</dbReference>
<dbReference type="Pfam" id="PF22698">
    <property type="entry name" value="Semialdhyde_dhC_1"/>
    <property type="match status" value="1"/>
</dbReference>
<dbReference type="SMART" id="SM00859">
    <property type="entry name" value="Semialdhyde_dh"/>
    <property type="match status" value="1"/>
</dbReference>
<dbReference type="SUPFAM" id="SSF55347">
    <property type="entry name" value="Glyceraldehyde-3-phosphate dehydrogenase-like, C-terminal domain"/>
    <property type="match status" value="1"/>
</dbReference>
<dbReference type="SUPFAM" id="SSF51735">
    <property type="entry name" value="NAD(P)-binding Rossmann-fold domains"/>
    <property type="match status" value="1"/>
</dbReference>
<dbReference type="PROSITE" id="PS01224">
    <property type="entry name" value="ARGC"/>
    <property type="match status" value="1"/>
</dbReference>
<comment type="function">
    <text evidence="1">Catalyzes the NADPH-dependent reduction of N-acetyl-5-glutamyl phosphate to yield N-acetyl-L-glutamate 5-semialdehyde.</text>
</comment>
<comment type="catalytic activity">
    <reaction evidence="1">
        <text>N-acetyl-L-glutamate 5-semialdehyde + phosphate + NADP(+) = N-acetyl-L-glutamyl 5-phosphate + NADPH + H(+)</text>
        <dbReference type="Rhea" id="RHEA:21588"/>
        <dbReference type="ChEBI" id="CHEBI:15378"/>
        <dbReference type="ChEBI" id="CHEBI:29123"/>
        <dbReference type="ChEBI" id="CHEBI:43474"/>
        <dbReference type="ChEBI" id="CHEBI:57783"/>
        <dbReference type="ChEBI" id="CHEBI:57936"/>
        <dbReference type="ChEBI" id="CHEBI:58349"/>
        <dbReference type="EC" id="1.2.1.38"/>
    </reaction>
</comment>
<comment type="pathway">
    <text evidence="1">Amino-acid biosynthesis; L-arginine biosynthesis; N(2)-acetyl-L-ornithine from L-glutamate: step 3/4.</text>
</comment>
<comment type="subcellular location">
    <subcellularLocation>
        <location evidence="1">Cytoplasm</location>
    </subcellularLocation>
</comment>
<comment type="similarity">
    <text evidence="1">Belongs to the NAGSA dehydrogenase family. Type 1 subfamily.</text>
</comment>
<keyword id="KW-0028">Amino-acid biosynthesis</keyword>
<keyword id="KW-0055">Arginine biosynthesis</keyword>
<keyword id="KW-0963">Cytoplasm</keyword>
<keyword id="KW-0521">NADP</keyword>
<keyword id="KW-0560">Oxidoreductase</keyword>